<accession>Q482K5</accession>
<gene>
    <name type="ordered locus">CPS_2292</name>
</gene>
<name>NTPPB_COLP3</name>
<comment type="function">
    <text evidence="1">Nucleoside triphosphate pyrophosphatase that hydrolyzes 7-methyl-GTP (m(7)GTP). May have a dual role in cell division arrest and in preventing the incorporation of modified nucleotides into cellular nucleic acids.</text>
</comment>
<comment type="catalytic activity">
    <reaction evidence="1">
        <text>N(7)-methyl-GTP + H2O = N(7)-methyl-GMP + diphosphate + H(+)</text>
        <dbReference type="Rhea" id="RHEA:58744"/>
        <dbReference type="ChEBI" id="CHEBI:15377"/>
        <dbReference type="ChEBI" id="CHEBI:15378"/>
        <dbReference type="ChEBI" id="CHEBI:33019"/>
        <dbReference type="ChEBI" id="CHEBI:58285"/>
        <dbReference type="ChEBI" id="CHEBI:87133"/>
    </reaction>
</comment>
<comment type="cofactor">
    <cofactor evidence="1">
        <name>a divalent metal cation</name>
        <dbReference type="ChEBI" id="CHEBI:60240"/>
    </cofactor>
</comment>
<comment type="subcellular location">
    <subcellularLocation>
        <location evidence="1">Cytoplasm</location>
    </subcellularLocation>
</comment>
<comment type="similarity">
    <text evidence="1">Belongs to the Maf family. YceF subfamily.</text>
</comment>
<protein>
    <recommendedName>
        <fullName evidence="1">7-methyl-GTP pyrophosphatase</fullName>
        <shortName evidence="1">m(7)GTP pyrophosphatase</shortName>
        <ecNumber evidence="1">3.6.1.-</ecNumber>
    </recommendedName>
</protein>
<sequence>MKTLVLGSTSPFRKTILEKLQLPFHCAKPNVDETEQKNESPQALVERLAIEKAKAVSSEYPNALIIGSDQVAVCEEEILGKPHNFDNAVVQLNKFSGKSITFYTGLCVYDSEKDKTIALVEPFIVHFNQLSQKDIANYLNAEQPYNCAGSFKSEGLGICLFSKLEGDDPNTLIGLPLIKLVGLLKQHGIDVLAEQSKLTV</sequence>
<evidence type="ECO:0000255" key="1">
    <source>
        <dbReference type="HAMAP-Rule" id="MF_00528"/>
    </source>
</evidence>
<dbReference type="EC" id="3.6.1.-" evidence="1"/>
<dbReference type="EMBL" id="CP000083">
    <property type="protein sequence ID" value="AAZ24133.1"/>
    <property type="molecule type" value="Genomic_DNA"/>
</dbReference>
<dbReference type="RefSeq" id="WP_011043106.1">
    <property type="nucleotide sequence ID" value="NC_003910.7"/>
</dbReference>
<dbReference type="SMR" id="Q482K5"/>
<dbReference type="STRING" id="167879.CPS_2292"/>
<dbReference type="KEGG" id="cps:CPS_2292"/>
<dbReference type="HOGENOM" id="CLU_040416_1_0_6"/>
<dbReference type="Proteomes" id="UP000000547">
    <property type="component" value="Chromosome"/>
</dbReference>
<dbReference type="GO" id="GO:0005737">
    <property type="term" value="C:cytoplasm"/>
    <property type="evidence" value="ECO:0007669"/>
    <property type="project" value="UniProtKB-SubCell"/>
</dbReference>
<dbReference type="GO" id="GO:0047429">
    <property type="term" value="F:nucleoside triphosphate diphosphatase activity"/>
    <property type="evidence" value="ECO:0007669"/>
    <property type="project" value="InterPro"/>
</dbReference>
<dbReference type="GO" id="GO:0009117">
    <property type="term" value="P:nucleotide metabolic process"/>
    <property type="evidence" value="ECO:0007669"/>
    <property type="project" value="UniProtKB-KW"/>
</dbReference>
<dbReference type="CDD" id="cd00555">
    <property type="entry name" value="Maf"/>
    <property type="match status" value="1"/>
</dbReference>
<dbReference type="FunFam" id="3.90.950.10:FF:000005">
    <property type="entry name" value="7-methyl-GTP pyrophosphatase"/>
    <property type="match status" value="1"/>
</dbReference>
<dbReference type="Gene3D" id="3.90.950.10">
    <property type="match status" value="1"/>
</dbReference>
<dbReference type="HAMAP" id="MF_00528">
    <property type="entry name" value="Maf"/>
    <property type="match status" value="1"/>
</dbReference>
<dbReference type="InterPro" id="IPR029001">
    <property type="entry name" value="ITPase-like_fam"/>
</dbReference>
<dbReference type="InterPro" id="IPR003697">
    <property type="entry name" value="Maf-like"/>
</dbReference>
<dbReference type="NCBIfam" id="TIGR00172">
    <property type="entry name" value="maf"/>
    <property type="match status" value="1"/>
</dbReference>
<dbReference type="PANTHER" id="PTHR43213:SF10">
    <property type="entry name" value="7-METHYL-GTP PYROPHOSPHATASE"/>
    <property type="match status" value="1"/>
</dbReference>
<dbReference type="PANTHER" id="PTHR43213">
    <property type="entry name" value="BIFUNCTIONAL DTTP/UTP PYROPHOSPHATASE/METHYLTRANSFERASE PROTEIN-RELATED"/>
    <property type="match status" value="1"/>
</dbReference>
<dbReference type="Pfam" id="PF02545">
    <property type="entry name" value="Maf"/>
    <property type="match status" value="1"/>
</dbReference>
<dbReference type="PIRSF" id="PIRSF006305">
    <property type="entry name" value="Maf"/>
    <property type="match status" value="1"/>
</dbReference>
<dbReference type="SUPFAM" id="SSF52972">
    <property type="entry name" value="ITPase-like"/>
    <property type="match status" value="1"/>
</dbReference>
<organism>
    <name type="scientific">Colwellia psychrerythraea (strain 34H / ATCC BAA-681)</name>
    <name type="common">Vibrio psychroerythus</name>
    <dbReference type="NCBI Taxonomy" id="167879"/>
    <lineage>
        <taxon>Bacteria</taxon>
        <taxon>Pseudomonadati</taxon>
        <taxon>Pseudomonadota</taxon>
        <taxon>Gammaproteobacteria</taxon>
        <taxon>Alteromonadales</taxon>
        <taxon>Colwelliaceae</taxon>
        <taxon>Colwellia</taxon>
    </lineage>
</organism>
<feature type="chain" id="PRO_0000267288" description="7-methyl-GTP pyrophosphatase">
    <location>
        <begin position="1"/>
        <end position="200"/>
    </location>
</feature>
<feature type="active site" description="Proton acceptor" evidence="1">
    <location>
        <position position="69"/>
    </location>
</feature>
<feature type="site" description="Important for substrate specificity" evidence="1">
    <location>
        <position position="12"/>
    </location>
</feature>
<feature type="site" description="Important for substrate specificity" evidence="1">
    <location>
        <position position="70"/>
    </location>
</feature>
<feature type="site" description="Important for substrate specificity" evidence="1">
    <location>
        <position position="154"/>
    </location>
</feature>
<reference key="1">
    <citation type="journal article" date="2005" name="Proc. Natl. Acad. Sci. U.S.A.">
        <title>The psychrophilic lifestyle as revealed by the genome sequence of Colwellia psychrerythraea 34H through genomic and proteomic analyses.</title>
        <authorList>
            <person name="Methe B.A."/>
            <person name="Nelson K.E."/>
            <person name="Deming J.W."/>
            <person name="Momen B."/>
            <person name="Melamud E."/>
            <person name="Zhang X."/>
            <person name="Moult J."/>
            <person name="Madupu R."/>
            <person name="Nelson W.C."/>
            <person name="Dodson R.J."/>
            <person name="Brinkac L.M."/>
            <person name="Daugherty S.C."/>
            <person name="Durkin A.S."/>
            <person name="DeBoy R.T."/>
            <person name="Kolonay J.F."/>
            <person name="Sullivan S.A."/>
            <person name="Zhou L."/>
            <person name="Davidsen T.M."/>
            <person name="Wu M."/>
            <person name="Huston A.L."/>
            <person name="Lewis M."/>
            <person name="Weaver B."/>
            <person name="Weidman J.F."/>
            <person name="Khouri H."/>
            <person name="Utterback T.R."/>
            <person name="Feldblyum T.V."/>
            <person name="Fraser C.M."/>
        </authorList>
    </citation>
    <scope>NUCLEOTIDE SEQUENCE [LARGE SCALE GENOMIC DNA]</scope>
    <source>
        <strain>34H / ATCC BAA-681</strain>
    </source>
</reference>
<keyword id="KW-0963">Cytoplasm</keyword>
<keyword id="KW-0378">Hydrolase</keyword>
<keyword id="KW-0546">Nucleotide metabolism</keyword>
<proteinExistence type="inferred from homology"/>